<gene>
    <name evidence="1" type="primary">ligA</name>
    <name type="synonym">lig</name>
    <name type="ordered locus">ZMO0364</name>
</gene>
<proteinExistence type="inferred from homology"/>
<name>DNLJ_ZYMMO</name>
<comment type="function">
    <text>DNA ligase that catalyzes the formation of phosphodiester linkages between 5'-phosphoryl and 3'-hydroxyl groups in double-stranded DNA using NAD as a coenzyme and as the energy source for the reaction. It is essential for DNA replication and repair of damaged DNA.</text>
</comment>
<comment type="catalytic activity">
    <reaction evidence="1">
        <text>NAD(+) + (deoxyribonucleotide)n-3'-hydroxyl + 5'-phospho-(deoxyribonucleotide)m = (deoxyribonucleotide)n+m + AMP + beta-nicotinamide D-nucleotide.</text>
        <dbReference type="EC" id="6.5.1.2"/>
    </reaction>
</comment>
<comment type="cofactor">
    <cofactor evidence="1">
        <name>Mg(2+)</name>
        <dbReference type="ChEBI" id="CHEBI:18420"/>
    </cofactor>
    <cofactor evidence="1">
        <name>Mn(2+)</name>
        <dbReference type="ChEBI" id="CHEBI:29035"/>
    </cofactor>
</comment>
<comment type="similarity">
    <text evidence="1">Belongs to the NAD-dependent DNA ligase family. LigA subfamily.</text>
</comment>
<dbReference type="EC" id="6.5.1.2" evidence="1"/>
<dbReference type="EMBL" id="Z11910">
    <property type="protein sequence ID" value="CAA77966.1"/>
    <property type="molecule type" value="Genomic_DNA"/>
</dbReference>
<dbReference type="EMBL" id="AF313764">
    <property type="protein sequence ID" value="AAG29863.1"/>
    <property type="molecule type" value="Genomic_DNA"/>
</dbReference>
<dbReference type="EMBL" id="AE008692">
    <property type="protein sequence ID" value="AAV88988.1"/>
    <property type="molecule type" value="Genomic_DNA"/>
</dbReference>
<dbReference type="PIR" id="S20687">
    <property type="entry name" value="S20687"/>
</dbReference>
<dbReference type="RefSeq" id="WP_011240286.1">
    <property type="nucleotide sequence ID" value="NZ_CP035711.1"/>
</dbReference>
<dbReference type="SMR" id="P28719"/>
<dbReference type="STRING" id="264203.ZMO0364"/>
<dbReference type="KEGG" id="zmo:ZMO0364"/>
<dbReference type="eggNOG" id="COG0272">
    <property type="taxonomic scope" value="Bacteria"/>
</dbReference>
<dbReference type="HOGENOM" id="CLU_007764_2_1_5"/>
<dbReference type="Proteomes" id="UP000001173">
    <property type="component" value="Chromosome"/>
</dbReference>
<dbReference type="GO" id="GO:0005829">
    <property type="term" value="C:cytosol"/>
    <property type="evidence" value="ECO:0007669"/>
    <property type="project" value="TreeGrafter"/>
</dbReference>
<dbReference type="GO" id="GO:0003911">
    <property type="term" value="F:DNA ligase (NAD+) activity"/>
    <property type="evidence" value="ECO:0007669"/>
    <property type="project" value="UniProtKB-UniRule"/>
</dbReference>
<dbReference type="GO" id="GO:0046872">
    <property type="term" value="F:metal ion binding"/>
    <property type="evidence" value="ECO:0007669"/>
    <property type="project" value="UniProtKB-KW"/>
</dbReference>
<dbReference type="GO" id="GO:0006281">
    <property type="term" value="P:DNA repair"/>
    <property type="evidence" value="ECO:0007669"/>
    <property type="project" value="UniProtKB-KW"/>
</dbReference>
<dbReference type="GO" id="GO:0006260">
    <property type="term" value="P:DNA replication"/>
    <property type="evidence" value="ECO:0007669"/>
    <property type="project" value="UniProtKB-KW"/>
</dbReference>
<dbReference type="CDD" id="cd17748">
    <property type="entry name" value="BRCT_DNA_ligase_like"/>
    <property type="match status" value="1"/>
</dbReference>
<dbReference type="CDD" id="cd00114">
    <property type="entry name" value="LIGANc"/>
    <property type="match status" value="1"/>
</dbReference>
<dbReference type="FunFam" id="2.40.50.140:FF:000012">
    <property type="entry name" value="DNA ligase"/>
    <property type="match status" value="1"/>
</dbReference>
<dbReference type="FunFam" id="3.30.470.30:FF:000001">
    <property type="entry name" value="DNA ligase"/>
    <property type="match status" value="1"/>
</dbReference>
<dbReference type="Gene3D" id="6.20.10.30">
    <property type="match status" value="1"/>
</dbReference>
<dbReference type="Gene3D" id="1.10.150.20">
    <property type="entry name" value="5' to 3' exonuclease, C-terminal subdomain"/>
    <property type="match status" value="2"/>
</dbReference>
<dbReference type="Gene3D" id="3.40.50.10190">
    <property type="entry name" value="BRCT domain"/>
    <property type="match status" value="1"/>
</dbReference>
<dbReference type="Gene3D" id="3.30.470.30">
    <property type="entry name" value="DNA ligase/mRNA capping enzyme"/>
    <property type="match status" value="1"/>
</dbReference>
<dbReference type="Gene3D" id="1.10.287.610">
    <property type="entry name" value="Helix hairpin bin"/>
    <property type="match status" value="1"/>
</dbReference>
<dbReference type="Gene3D" id="2.40.50.140">
    <property type="entry name" value="Nucleic acid-binding proteins"/>
    <property type="match status" value="1"/>
</dbReference>
<dbReference type="HAMAP" id="MF_01588">
    <property type="entry name" value="DNA_ligase_A"/>
    <property type="match status" value="1"/>
</dbReference>
<dbReference type="InterPro" id="IPR001357">
    <property type="entry name" value="BRCT_dom"/>
</dbReference>
<dbReference type="InterPro" id="IPR036420">
    <property type="entry name" value="BRCT_dom_sf"/>
</dbReference>
<dbReference type="InterPro" id="IPR041663">
    <property type="entry name" value="DisA/LigA_HHH"/>
</dbReference>
<dbReference type="InterPro" id="IPR001679">
    <property type="entry name" value="DNA_ligase"/>
</dbReference>
<dbReference type="InterPro" id="IPR018239">
    <property type="entry name" value="DNA_ligase_AS"/>
</dbReference>
<dbReference type="InterPro" id="IPR033136">
    <property type="entry name" value="DNA_ligase_CS"/>
</dbReference>
<dbReference type="InterPro" id="IPR013839">
    <property type="entry name" value="DNAligase_adenylation"/>
</dbReference>
<dbReference type="InterPro" id="IPR013840">
    <property type="entry name" value="DNAligase_N"/>
</dbReference>
<dbReference type="InterPro" id="IPR012340">
    <property type="entry name" value="NA-bd_OB-fold"/>
</dbReference>
<dbReference type="InterPro" id="IPR004150">
    <property type="entry name" value="NAD_DNA_ligase_OB"/>
</dbReference>
<dbReference type="InterPro" id="IPR010994">
    <property type="entry name" value="RuvA_2-like"/>
</dbReference>
<dbReference type="InterPro" id="IPR004149">
    <property type="entry name" value="Znf_DNAligase_C4"/>
</dbReference>
<dbReference type="NCBIfam" id="TIGR00575">
    <property type="entry name" value="dnlj"/>
    <property type="match status" value="1"/>
</dbReference>
<dbReference type="NCBIfam" id="NF005932">
    <property type="entry name" value="PRK07956.1"/>
    <property type="match status" value="1"/>
</dbReference>
<dbReference type="PANTHER" id="PTHR23389">
    <property type="entry name" value="CHROMOSOME TRANSMISSION FIDELITY FACTOR 18"/>
    <property type="match status" value="1"/>
</dbReference>
<dbReference type="PANTHER" id="PTHR23389:SF9">
    <property type="entry name" value="DNA LIGASE"/>
    <property type="match status" value="1"/>
</dbReference>
<dbReference type="Pfam" id="PF00533">
    <property type="entry name" value="BRCT"/>
    <property type="match status" value="1"/>
</dbReference>
<dbReference type="Pfam" id="PF01653">
    <property type="entry name" value="DNA_ligase_aden"/>
    <property type="match status" value="1"/>
</dbReference>
<dbReference type="Pfam" id="PF03120">
    <property type="entry name" value="DNA_ligase_OB"/>
    <property type="match status" value="1"/>
</dbReference>
<dbReference type="Pfam" id="PF03119">
    <property type="entry name" value="DNA_ligase_ZBD"/>
    <property type="match status" value="1"/>
</dbReference>
<dbReference type="Pfam" id="PF12826">
    <property type="entry name" value="HHH_2"/>
    <property type="match status" value="1"/>
</dbReference>
<dbReference type="PIRSF" id="PIRSF001604">
    <property type="entry name" value="LigA"/>
    <property type="match status" value="1"/>
</dbReference>
<dbReference type="SMART" id="SM00292">
    <property type="entry name" value="BRCT"/>
    <property type="match status" value="1"/>
</dbReference>
<dbReference type="SMART" id="SM00532">
    <property type="entry name" value="LIGANc"/>
    <property type="match status" value="1"/>
</dbReference>
<dbReference type="SUPFAM" id="SSF52113">
    <property type="entry name" value="BRCT domain"/>
    <property type="match status" value="1"/>
</dbReference>
<dbReference type="SUPFAM" id="SSF56091">
    <property type="entry name" value="DNA ligase/mRNA capping enzyme, catalytic domain"/>
    <property type="match status" value="1"/>
</dbReference>
<dbReference type="SUPFAM" id="SSF50249">
    <property type="entry name" value="Nucleic acid-binding proteins"/>
    <property type="match status" value="1"/>
</dbReference>
<dbReference type="SUPFAM" id="SSF47781">
    <property type="entry name" value="RuvA domain 2-like"/>
    <property type="match status" value="1"/>
</dbReference>
<dbReference type="PROSITE" id="PS50172">
    <property type="entry name" value="BRCT"/>
    <property type="match status" value="1"/>
</dbReference>
<dbReference type="PROSITE" id="PS01055">
    <property type="entry name" value="DNA_LIGASE_N1"/>
    <property type="match status" value="1"/>
</dbReference>
<dbReference type="PROSITE" id="PS01056">
    <property type="entry name" value="DNA_LIGASE_N2"/>
    <property type="match status" value="1"/>
</dbReference>
<protein>
    <recommendedName>
        <fullName evidence="1">DNA ligase</fullName>
        <ecNumber evidence="1">6.5.1.2</ecNumber>
    </recommendedName>
    <alternativeName>
        <fullName evidence="1">Polydeoxyribonucleotide synthase [NAD(+)]</fullName>
    </alternativeName>
</protein>
<feature type="chain" id="PRO_0000161775" description="DNA ligase">
    <location>
        <begin position="1"/>
        <end position="731"/>
    </location>
</feature>
<feature type="domain" description="BRCT" evidence="1">
    <location>
        <begin position="645"/>
        <end position="731"/>
    </location>
</feature>
<feature type="active site" description="N6-AMP-lysine intermediate" evidence="1">
    <location>
        <position position="144"/>
    </location>
</feature>
<feature type="binding site" evidence="1">
    <location>
        <begin position="59"/>
        <end position="63"/>
    </location>
    <ligand>
        <name>NAD(+)</name>
        <dbReference type="ChEBI" id="CHEBI:57540"/>
    </ligand>
</feature>
<feature type="binding site" evidence="1">
    <location>
        <begin position="108"/>
        <end position="109"/>
    </location>
    <ligand>
        <name>NAD(+)</name>
        <dbReference type="ChEBI" id="CHEBI:57540"/>
    </ligand>
</feature>
<feature type="binding site" evidence="1">
    <location>
        <position position="142"/>
    </location>
    <ligand>
        <name>NAD(+)</name>
        <dbReference type="ChEBI" id="CHEBI:57540"/>
    </ligand>
</feature>
<feature type="binding site" evidence="1">
    <location>
        <position position="165"/>
    </location>
    <ligand>
        <name>NAD(+)</name>
        <dbReference type="ChEBI" id="CHEBI:57540"/>
    </ligand>
</feature>
<feature type="binding site" evidence="1">
    <location>
        <position position="202"/>
    </location>
    <ligand>
        <name>NAD(+)</name>
        <dbReference type="ChEBI" id="CHEBI:57540"/>
    </ligand>
</feature>
<feature type="binding site" evidence="1">
    <location>
        <position position="318"/>
    </location>
    <ligand>
        <name>NAD(+)</name>
        <dbReference type="ChEBI" id="CHEBI:57540"/>
    </ligand>
</feature>
<feature type="binding site" evidence="1">
    <location>
        <position position="342"/>
    </location>
    <ligand>
        <name>NAD(+)</name>
        <dbReference type="ChEBI" id="CHEBI:57540"/>
    </ligand>
</feature>
<feature type="binding site" evidence="1">
    <location>
        <position position="434"/>
    </location>
    <ligand>
        <name>Zn(2+)</name>
        <dbReference type="ChEBI" id="CHEBI:29105"/>
    </ligand>
</feature>
<feature type="binding site" evidence="1">
    <location>
        <position position="437"/>
    </location>
    <ligand>
        <name>Zn(2+)</name>
        <dbReference type="ChEBI" id="CHEBI:29105"/>
    </ligand>
</feature>
<feature type="binding site" evidence="1">
    <location>
        <position position="452"/>
    </location>
    <ligand>
        <name>Zn(2+)</name>
        <dbReference type="ChEBI" id="CHEBI:29105"/>
    </ligand>
</feature>
<feature type="binding site" evidence="1">
    <location>
        <position position="458"/>
    </location>
    <ligand>
        <name>Zn(2+)</name>
        <dbReference type="ChEBI" id="CHEBI:29105"/>
    </ligand>
</feature>
<feature type="sequence conflict" description="In Ref. 1 and 2." evidence="2" ref="1 2">
    <original>D</original>
    <variation>N</variation>
    <location>
        <position position="25"/>
    </location>
</feature>
<feature type="sequence conflict" description="In Ref. 1 and 2." evidence="2" ref="1 2">
    <original>A</original>
    <variation>T</variation>
    <location>
        <position position="211"/>
    </location>
</feature>
<feature type="sequence conflict" description="In Ref. 1 and 2." evidence="2" ref="1 2">
    <original>V</original>
    <variation>M</variation>
    <location>
        <position position="273"/>
    </location>
</feature>
<feature type="sequence conflict" description="In Ref. 1 and 2." evidence="2" ref="1 2">
    <original>R</original>
    <variation>H</variation>
    <location>
        <position position="429"/>
    </location>
</feature>
<feature type="sequence conflict" description="In Ref. 1 and 2." evidence="2" ref="1 2">
    <original>R</original>
    <variation>A</variation>
    <location>
        <position position="465"/>
    </location>
</feature>
<feature type="sequence conflict" description="In Ref. 1 and 2." evidence="2" ref="1 2">
    <original>E</original>
    <variation>D</variation>
    <location>
        <position position="478"/>
    </location>
</feature>
<feature type="sequence conflict" description="In Ref. 1 and 2." evidence="2" ref="1 2">
    <original>D</original>
    <variation>G</variation>
    <location>
        <position position="724"/>
    </location>
</feature>
<feature type="sequence conflict" description="In Ref. 1 and 2." evidence="2" ref="1 2">
    <original>D</original>
    <variation>E</variation>
    <location>
        <position position="727"/>
    </location>
</feature>
<accession>P28719</accession>
<accession>Q5NQL6</accession>
<evidence type="ECO:0000255" key="1">
    <source>
        <dbReference type="HAMAP-Rule" id="MF_01588"/>
    </source>
</evidence>
<evidence type="ECO:0000305" key="2"/>
<organism>
    <name type="scientific">Zymomonas mobilis subsp. mobilis (strain ATCC 31821 / ZM4 / CP4)</name>
    <dbReference type="NCBI Taxonomy" id="264203"/>
    <lineage>
        <taxon>Bacteria</taxon>
        <taxon>Pseudomonadati</taxon>
        <taxon>Pseudomonadota</taxon>
        <taxon>Alphaproteobacteria</taxon>
        <taxon>Sphingomonadales</taxon>
        <taxon>Zymomonadaceae</taxon>
        <taxon>Zymomonas</taxon>
    </lineage>
</organism>
<reference key="1">
    <citation type="journal article" date="1992" name="FEMS Microbiol. Lett.">
        <title>Cloning and molecular characterization of the DNA ligase gene (lig) from Zymomonas mobilis.</title>
        <authorList>
            <person name="Shark K.B."/>
            <person name="Conway T."/>
        </authorList>
    </citation>
    <scope>NUCLEOTIDE SEQUENCE [GENOMIC DNA]</scope>
    <source>
        <strain>ATCC 31821 / ZM4 / CP4</strain>
    </source>
</reference>
<reference key="2">
    <citation type="submission" date="2000-10" db="EMBL/GenBank/DDBJ databases">
        <authorList>
            <person name="Ahn J.Y."/>
            <person name="Kang H.S."/>
        </authorList>
    </citation>
    <scope>NUCLEOTIDE SEQUENCE [GENOMIC DNA]</scope>
    <source>
        <strain>ATCC 31821 / ZM4 / CP4</strain>
    </source>
</reference>
<reference key="3">
    <citation type="journal article" date="2005" name="Nat. Biotechnol.">
        <title>The genome sequence of the ethanologenic bacterium Zymomonas mobilis ZM4.</title>
        <authorList>
            <person name="Seo J.-S."/>
            <person name="Chong H."/>
            <person name="Park H.S."/>
            <person name="Yoon K.-O."/>
            <person name="Jung C."/>
            <person name="Kim J.J."/>
            <person name="Hong J.H."/>
            <person name="Kim H."/>
            <person name="Kim J.-H."/>
            <person name="Kil J.-I."/>
            <person name="Park C.J."/>
            <person name="Oh H.-M."/>
            <person name="Lee J.-S."/>
            <person name="Jin S.-J."/>
            <person name="Um H.-W."/>
            <person name="Lee H.-J."/>
            <person name="Oh S.-J."/>
            <person name="Kim J.Y."/>
            <person name="Kang H.L."/>
            <person name="Lee S.Y."/>
            <person name="Lee K.J."/>
            <person name="Kang H.S."/>
        </authorList>
    </citation>
    <scope>NUCLEOTIDE SEQUENCE [LARGE SCALE GENOMIC DNA]</scope>
    <source>
        <strain>ATCC 31821 / ZM4 / CP4</strain>
    </source>
</reference>
<sequence length="731" mass="82191">MNADIDLFSYLNPEKQDLSALAPKDLSREQAVIELERLAKLISHYDHLYHDKDNPAVPDSEYDALVLRNRRIEQFFPDLIRPDSPSKKVGSRPNSRLPKIAHRAAMLSLDNGFLDQDVEDFLGRVRRFFNLKENQAVICTVEPKIDGLSCSLRYEKGILTQAVTRGDGVIGEDVTPNVRVIDDIPKTLKGDNWPEIIEIRGEVYMAKSDFAALNARQTEENKKLFANPRNAAAGSLRQLDPNITARRSLRFLAHGWGEATSLPADTQYGMMKVIESYGLSVSNLLARADDIGQMLDFYQKIEAERADLDFDIDGVVYKLDQLDWQQRFGFSARAPRFALAHKFPAEKAQTTLLDIEIQVGRTGVLTPVAKLEPVTVGGVVVSSATLHNSDEIERLGVRPGDRVLVQRAGDVIPQIVENLTPDVDRPIWRFPHRCPVCDSVARREEGEVAWRCTGGLICPAQRVERLCHFVSRTAFEIEGLGKSHIESFFADKLIETPADIFRLFQKRQLLIEREGWGELSVDNLISAIDKRRKVPFDRFLFALGIRHVGAVTARDLAKSYQTWDNFKAAIDEAAHLRTILQPSSEESEEKYQKRVDKELISFFHIPNMGGKIIRSLLDFFAETHNSDVVSDLLQEVQIEPLYFELASSPLSGKIIVFTGSLQKITRDEAKRQAENLGAKVASSVSKKTNLVVAGEAAGSKLSKAKELDISIIDEDRWHRIVENDGQDSIKI</sequence>
<keyword id="KW-0227">DNA damage</keyword>
<keyword id="KW-0234">DNA repair</keyword>
<keyword id="KW-0235">DNA replication</keyword>
<keyword id="KW-0436">Ligase</keyword>
<keyword id="KW-0460">Magnesium</keyword>
<keyword id="KW-0464">Manganese</keyword>
<keyword id="KW-0479">Metal-binding</keyword>
<keyword id="KW-0520">NAD</keyword>
<keyword id="KW-1185">Reference proteome</keyword>
<keyword id="KW-0862">Zinc</keyword>